<dbReference type="EMBL" id="AJ422143">
    <property type="protein sequence ID" value="CAD19523.1"/>
    <property type="molecule type" value="mRNA"/>
</dbReference>
<dbReference type="CCDS" id="CCDS28402.1"/>
<dbReference type="RefSeq" id="NP_954860.1">
    <property type="nucleotide sequence ID" value="NM_199252.2"/>
</dbReference>
<dbReference type="RefSeq" id="XP_011244517.1">
    <property type="nucleotide sequence ID" value="XM_011246215.4"/>
</dbReference>
<dbReference type="RefSeq" id="XP_011244518.1">
    <property type="nucleotide sequence ID" value="XM_011246216.3"/>
</dbReference>
<dbReference type="RefSeq" id="XP_011244519.1">
    <property type="nucleotide sequence ID" value="XM_011246217.3"/>
</dbReference>
<dbReference type="RefSeq" id="XP_011244520.1">
    <property type="nucleotide sequence ID" value="XM_011246218.3"/>
</dbReference>
<dbReference type="SMR" id="Q710D3"/>
<dbReference type="FunCoup" id="Q710D3">
    <property type="interactions" value="470"/>
</dbReference>
<dbReference type="STRING" id="10090.ENSMUSP00000156756"/>
<dbReference type="GlyCosmos" id="Q710D3">
    <property type="glycosylation" value="1 site, No reported glycans"/>
</dbReference>
<dbReference type="GlyGen" id="Q710D3">
    <property type="glycosylation" value="1 site"/>
</dbReference>
<dbReference type="PaxDb" id="10090-ENSMUSP00000082032"/>
<dbReference type="DNASU" id="381058"/>
<dbReference type="Ensembl" id="ENSMUST00000084966.6">
    <property type="protein sequence ID" value="ENSMUSP00000082032.6"/>
    <property type="gene ID" value="ENSMUSG00000067049.9"/>
</dbReference>
<dbReference type="Ensembl" id="ENSMUST00000232960.2">
    <property type="protein sequence ID" value="ENSMUSP00000156970.2"/>
    <property type="gene ID" value="ENSMUSG00000067049.9"/>
</dbReference>
<dbReference type="Ensembl" id="ENSMUST00000233405.2">
    <property type="protein sequence ID" value="ENSMUSP00000156756.2"/>
    <property type="gene ID" value="ENSMUSG00000067049.9"/>
</dbReference>
<dbReference type="GeneID" id="381058"/>
<dbReference type="KEGG" id="mmu:381058"/>
<dbReference type="UCSC" id="uc008amc.1">
    <property type="organism name" value="mouse"/>
</dbReference>
<dbReference type="AGR" id="MGI:1933250"/>
<dbReference type="CTD" id="54346"/>
<dbReference type="MGI" id="MGI:1933250">
    <property type="gene designation" value="Unc93a"/>
</dbReference>
<dbReference type="VEuPathDB" id="HostDB:ENSMUSG00000067049"/>
<dbReference type="eggNOG" id="KOG3097">
    <property type="taxonomic scope" value="Eukaryota"/>
</dbReference>
<dbReference type="GeneTree" id="ENSGT00530000063359"/>
<dbReference type="HOGENOM" id="CLU_025356_1_1_1"/>
<dbReference type="InParanoid" id="Q710D3"/>
<dbReference type="OMA" id="NTACIIA"/>
<dbReference type="OrthoDB" id="90110at9989"/>
<dbReference type="PhylomeDB" id="Q710D3"/>
<dbReference type="TreeFam" id="TF314905"/>
<dbReference type="BioGRID-ORCS" id="381058">
    <property type="hits" value="2 hits in 45 CRISPR screens"/>
</dbReference>
<dbReference type="PRO" id="PR:Q710D3"/>
<dbReference type="Proteomes" id="UP000000589">
    <property type="component" value="Chromosome 17"/>
</dbReference>
<dbReference type="RNAct" id="Q710D3">
    <property type="molecule type" value="protein"/>
</dbReference>
<dbReference type="Bgee" id="ENSMUSG00000067049">
    <property type="expression patterns" value="Expressed in embryonic cell in blastocyst and 16 other cell types or tissues"/>
</dbReference>
<dbReference type="GO" id="GO:0005886">
    <property type="term" value="C:plasma membrane"/>
    <property type="evidence" value="ECO:0007669"/>
    <property type="project" value="UniProtKB-SubCell"/>
</dbReference>
<dbReference type="CDD" id="cd17406">
    <property type="entry name" value="MFS_unc93A_like"/>
    <property type="match status" value="1"/>
</dbReference>
<dbReference type="FunFam" id="1.20.1250.20:FF:000290">
    <property type="entry name" value="Unc-93 homolog A"/>
    <property type="match status" value="1"/>
</dbReference>
<dbReference type="Gene3D" id="1.20.1250.20">
    <property type="entry name" value="MFS general substrate transporter like domains"/>
    <property type="match status" value="2"/>
</dbReference>
<dbReference type="InterPro" id="IPR010291">
    <property type="entry name" value="Ion_channel_UNC-93"/>
</dbReference>
<dbReference type="InterPro" id="IPR036259">
    <property type="entry name" value="MFS_trans_sf"/>
</dbReference>
<dbReference type="InterPro" id="IPR051951">
    <property type="entry name" value="UNC-93_regulatory"/>
</dbReference>
<dbReference type="PANTHER" id="PTHR19444:SF13">
    <property type="entry name" value="PROTEIN UNC-93 HOMOLOG A"/>
    <property type="match status" value="1"/>
</dbReference>
<dbReference type="PANTHER" id="PTHR19444">
    <property type="entry name" value="UNC-93 RELATED"/>
    <property type="match status" value="1"/>
</dbReference>
<dbReference type="Pfam" id="PF05978">
    <property type="entry name" value="UNC-93"/>
    <property type="match status" value="1"/>
</dbReference>
<dbReference type="SUPFAM" id="SSF103473">
    <property type="entry name" value="MFS general substrate transporter"/>
    <property type="match status" value="1"/>
</dbReference>
<proteinExistence type="evidence at transcript level"/>
<gene>
    <name type="primary">Unc93a</name>
</gene>
<evidence type="ECO:0000250" key="1"/>
<evidence type="ECO:0000255" key="2"/>
<evidence type="ECO:0000305" key="3"/>
<sequence length="458" mass="50370">MERSLKNVLVVSCGFLLLFTAYGGLQNLQSSLYSEQGLGVATLSTLYASVLLSSMFLPPILIKKCGCKWTIVGSMCCYVVFSLGNFHANWYTLIPTSILLGLGAAPLWSAQGTYLTTMGNLQAEKVGKLGKDVVNQYFGIFFLVFQSSGVWGNLISSLVFGKMSMQEAIPEEQLMSCGAKDCLMGPAATNSTHHPSQQLIYTLLGIYTGCGVLAILLVAVFLESLEDKLENEGERRPRPPPLWSTLLSTFMLFRDKRLCLLMFLPLYSGFQQEFLSGEYTKSYVTCALGIHFVGYVMICFSAMTALCSLLYGKISKYTGRAALYALGAAIHFSCIVVFLLWHPNTNQLPVFFVLSGLWGMSDAVWQTQNNALFGVLFEENKEPAFANYRLGEAIGFVIAFGYSSFLCVSTKLYILLGVLSLAMVGYGTVEYLEVKAASKVLGAEKKNQAEEEEMKTKI</sequence>
<name>UN93A_MOUSE</name>
<keyword id="KW-1003">Cell membrane</keyword>
<keyword id="KW-0325">Glycoprotein</keyword>
<keyword id="KW-0472">Membrane</keyword>
<keyword id="KW-1185">Reference proteome</keyword>
<keyword id="KW-0812">Transmembrane</keyword>
<keyword id="KW-1133">Transmembrane helix</keyword>
<organism>
    <name type="scientific">Mus musculus</name>
    <name type="common">Mouse</name>
    <dbReference type="NCBI Taxonomy" id="10090"/>
    <lineage>
        <taxon>Eukaryota</taxon>
        <taxon>Metazoa</taxon>
        <taxon>Chordata</taxon>
        <taxon>Craniata</taxon>
        <taxon>Vertebrata</taxon>
        <taxon>Euteleostomi</taxon>
        <taxon>Mammalia</taxon>
        <taxon>Eutheria</taxon>
        <taxon>Euarchontoglires</taxon>
        <taxon>Glires</taxon>
        <taxon>Rodentia</taxon>
        <taxon>Myomorpha</taxon>
        <taxon>Muroidea</taxon>
        <taxon>Muridae</taxon>
        <taxon>Murinae</taxon>
        <taxon>Mus</taxon>
        <taxon>Mus</taxon>
    </lineage>
</organism>
<accession>Q710D3</accession>
<protein>
    <recommendedName>
        <fullName>Protein unc-93 homolog A</fullName>
        <shortName>Unc-93A</shortName>
    </recommendedName>
</protein>
<comment type="subcellular location">
    <subcellularLocation>
        <location evidence="1">Cell membrane</location>
        <topology evidence="1">Multi-pass membrane protein</topology>
    </subcellularLocation>
</comment>
<comment type="similarity">
    <text evidence="3">Belongs to the unc-93 family.</text>
</comment>
<reference key="1">
    <citation type="thesis" date="2001" institute="University of Hannover" country="Germany">
        <title>Cloning and characterization of mammalian homologs of unc-93 from Caenorhabditis elegans, a protein relevant for muscle contraction.</title>
        <authorList>
            <person name="Kollewe A."/>
        </authorList>
    </citation>
    <scope>NUCLEOTIDE SEQUENCE [MRNA]</scope>
    <source>
        <strain>C57BL/6J</strain>
        <tissue>Embryo</tissue>
    </source>
</reference>
<feature type="chain" id="PRO_0000190037" description="Protein unc-93 homolog A">
    <location>
        <begin position="1"/>
        <end position="458"/>
    </location>
</feature>
<feature type="transmembrane region" description="Helical" evidence="2">
    <location>
        <begin position="8"/>
        <end position="28"/>
    </location>
</feature>
<feature type="transmembrane region" description="Helical" evidence="2">
    <location>
        <begin position="42"/>
        <end position="62"/>
    </location>
</feature>
<feature type="transmembrane region" description="Helical" evidence="2">
    <location>
        <begin position="69"/>
        <end position="89"/>
    </location>
</feature>
<feature type="transmembrane region" description="Helical" evidence="2">
    <location>
        <begin position="90"/>
        <end position="110"/>
    </location>
</feature>
<feature type="transmembrane region" description="Helical" evidence="2">
    <location>
        <begin position="140"/>
        <end position="160"/>
    </location>
</feature>
<feature type="transmembrane region" description="Helical" evidence="2">
    <location>
        <begin position="202"/>
        <end position="222"/>
    </location>
</feature>
<feature type="transmembrane region" description="Helical" evidence="2">
    <location>
        <begin position="258"/>
        <end position="275"/>
    </location>
</feature>
<feature type="transmembrane region" description="Helical" evidence="2">
    <location>
        <begin position="286"/>
        <end position="306"/>
    </location>
</feature>
<feature type="transmembrane region" description="Helical" evidence="2">
    <location>
        <begin position="321"/>
        <end position="341"/>
    </location>
</feature>
<feature type="transmembrane region" description="Helical" evidence="2">
    <location>
        <begin position="345"/>
        <end position="365"/>
    </location>
</feature>
<feature type="transmembrane region" description="Helical" evidence="2">
    <location>
        <begin position="390"/>
        <end position="410"/>
    </location>
</feature>
<feature type="transmembrane region" description="Helical" evidence="2">
    <location>
        <begin position="412"/>
        <end position="432"/>
    </location>
</feature>
<feature type="glycosylation site" description="N-linked (GlcNAc...) asparagine" evidence="2">
    <location>
        <position position="190"/>
    </location>
</feature>